<organism>
    <name type="scientific">Bacillus mycoides (strain KBAB4)</name>
    <name type="common">Bacillus weihenstephanensis</name>
    <dbReference type="NCBI Taxonomy" id="315730"/>
    <lineage>
        <taxon>Bacteria</taxon>
        <taxon>Bacillati</taxon>
        <taxon>Bacillota</taxon>
        <taxon>Bacilli</taxon>
        <taxon>Bacillales</taxon>
        <taxon>Bacillaceae</taxon>
        <taxon>Bacillus</taxon>
        <taxon>Bacillus cereus group</taxon>
    </lineage>
</organism>
<accession>A9VT50</accession>
<evidence type="ECO:0000250" key="1"/>
<evidence type="ECO:0000255" key="2">
    <source>
        <dbReference type="HAMAP-Rule" id="MF_00100"/>
    </source>
</evidence>
<evidence type="ECO:0000256" key="3">
    <source>
        <dbReference type="SAM" id="MobiDB-lite"/>
    </source>
</evidence>
<name>IF2_BACMK</name>
<gene>
    <name evidence="2" type="primary">infB</name>
    <name type="ordered locus">BcerKBAB4_3635</name>
</gene>
<keyword id="KW-0963">Cytoplasm</keyword>
<keyword id="KW-0342">GTP-binding</keyword>
<keyword id="KW-0396">Initiation factor</keyword>
<keyword id="KW-0547">Nucleotide-binding</keyword>
<keyword id="KW-0648">Protein biosynthesis</keyword>
<feature type="chain" id="PRO_1000093758" description="Translation initiation factor IF-2">
    <location>
        <begin position="1"/>
        <end position="688"/>
    </location>
</feature>
<feature type="domain" description="tr-type G">
    <location>
        <begin position="190"/>
        <end position="359"/>
    </location>
</feature>
<feature type="region of interest" description="Disordered" evidence="3">
    <location>
        <begin position="53"/>
        <end position="101"/>
    </location>
</feature>
<feature type="region of interest" description="G1" evidence="1">
    <location>
        <begin position="199"/>
        <end position="206"/>
    </location>
</feature>
<feature type="region of interest" description="G2" evidence="1">
    <location>
        <begin position="224"/>
        <end position="228"/>
    </location>
</feature>
<feature type="region of interest" description="G3" evidence="1">
    <location>
        <begin position="245"/>
        <end position="248"/>
    </location>
</feature>
<feature type="region of interest" description="G4" evidence="1">
    <location>
        <begin position="299"/>
        <end position="302"/>
    </location>
</feature>
<feature type="region of interest" description="G5" evidence="1">
    <location>
        <begin position="335"/>
        <end position="337"/>
    </location>
</feature>
<feature type="compositionally biased region" description="Basic residues" evidence="3">
    <location>
        <begin position="71"/>
        <end position="83"/>
    </location>
</feature>
<feature type="binding site" evidence="2">
    <location>
        <begin position="199"/>
        <end position="206"/>
    </location>
    <ligand>
        <name>GTP</name>
        <dbReference type="ChEBI" id="CHEBI:37565"/>
    </ligand>
</feature>
<feature type="binding site" evidence="2">
    <location>
        <begin position="245"/>
        <end position="249"/>
    </location>
    <ligand>
        <name>GTP</name>
        <dbReference type="ChEBI" id="CHEBI:37565"/>
    </ligand>
</feature>
<feature type="binding site" evidence="2">
    <location>
        <begin position="299"/>
        <end position="302"/>
    </location>
    <ligand>
        <name>GTP</name>
        <dbReference type="ChEBI" id="CHEBI:37565"/>
    </ligand>
</feature>
<proteinExistence type="inferred from homology"/>
<reference key="1">
    <citation type="journal article" date="2008" name="Chem. Biol. Interact.">
        <title>Extending the Bacillus cereus group genomics to putative food-borne pathogens of different toxicity.</title>
        <authorList>
            <person name="Lapidus A."/>
            <person name="Goltsman E."/>
            <person name="Auger S."/>
            <person name="Galleron N."/>
            <person name="Segurens B."/>
            <person name="Dossat C."/>
            <person name="Land M.L."/>
            <person name="Broussolle V."/>
            <person name="Brillard J."/>
            <person name="Guinebretiere M.-H."/>
            <person name="Sanchis V."/>
            <person name="Nguen-the C."/>
            <person name="Lereclus D."/>
            <person name="Richardson P."/>
            <person name="Wincker P."/>
            <person name="Weissenbach J."/>
            <person name="Ehrlich S.D."/>
            <person name="Sorokin A."/>
        </authorList>
    </citation>
    <scope>NUCLEOTIDE SEQUENCE [LARGE SCALE GENOMIC DNA]</scope>
    <source>
        <strain>KBAB4</strain>
    </source>
</reference>
<sequence>MSKIRVHEYAKKNNISSKDLMTKLKEMNIEVSNHMTMLEDEVVNKLDNQYSAGAEKPSVADEFEVEEKVVRSKKNSNKNKKKGKANEDKRQDNFAGRQQTPIVETPDKITFSGSLTVGDLAKKLSKEPSEIIKKLFMLGIMATINQDLDKDTIELIATDYGIEVEEEVVVSETEFETFIDEQDDEENLKERPAVVTIMGHVDHGKTTLLDSIRNSKVTAGEAGGITQHIGAYQVDVNDKKITFLDTPGHAVFTTMRARGAQVTDITILVVAADDGVMPQTVEAISHAKAAGVPIIVAVNKMDKPAANPDRVMQELTEYELVPEAWGGDTIFVPISAIQGEGIDNLLEMILLVSEVEEYKANPNRYAAGTVIEAQLDKGKGTIATLLVQNGTLRVGDPIVVGTSFGRVRAMVSDIGRRVKVAGPSTPVEITGLNEVPQAGDRFMAFADEKKARQIGESRAQEALVAQRGEKSKFSLEDLFQQIQEGDVKEINLIVKADVQGSVEAMAASLRKIDVEGVKVKIIHTGVGAITESDIILASASNAIVIGFNVRPDVNAKRTAELEKVDVRLHRIIYKVIEEIESAMQGMLDPEFEEKVIGQAEVRQTFKVTKVGTIAGCYVIDGKITRDSGVRIIRDGVVVFEGKLDTLKRFKDDVKEVAQNYECGITIERYNDLKEGDIIEAYVMEEVKR</sequence>
<dbReference type="EMBL" id="CP000903">
    <property type="protein sequence ID" value="ABY44806.1"/>
    <property type="molecule type" value="Genomic_DNA"/>
</dbReference>
<dbReference type="RefSeq" id="WP_012261584.1">
    <property type="nucleotide sequence ID" value="NC_010184.1"/>
</dbReference>
<dbReference type="SMR" id="A9VT50"/>
<dbReference type="KEGG" id="bwe:BcerKBAB4_3635"/>
<dbReference type="eggNOG" id="COG0532">
    <property type="taxonomic scope" value="Bacteria"/>
</dbReference>
<dbReference type="HOGENOM" id="CLU_006301_5_1_9"/>
<dbReference type="Proteomes" id="UP000002154">
    <property type="component" value="Chromosome"/>
</dbReference>
<dbReference type="GO" id="GO:0005829">
    <property type="term" value="C:cytosol"/>
    <property type="evidence" value="ECO:0007669"/>
    <property type="project" value="TreeGrafter"/>
</dbReference>
<dbReference type="GO" id="GO:0005525">
    <property type="term" value="F:GTP binding"/>
    <property type="evidence" value="ECO:0007669"/>
    <property type="project" value="UniProtKB-KW"/>
</dbReference>
<dbReference type="GO" id="GO:0003924">
    <property type="term" value="F:GTPase activity"/>
    <property type="evidence" value="ECO:0007669"/>
    <property type="project" value="UniProtKB-UniRule"/>
</dbReference>
<dbReference type="GO" id="GO:0003743">
    <property type="term" value="F:translation initiation factor activity"/>
    <property type="evidence" value="ECO:0007669"/>
    <property type="project" value="UniProtKB-UniRule"/>
</dbReference>
<dbReference type="CDD" id="cd01887">
    <property type="entry name" value="IF2_eIF5B"/>
    <property type="match status" value="1"/>
</dbReference>
<dbReference type="CDD" id="cd03702">
    <property type="entry name" value="IF2_mtIF2_II"/>
    <property type="match status" value="1"/>
</dbReference>
<dbReference type="CDD" id="cd03692">
    <property type="entry name" value="mtIF2_IVc"/>
    <property type="match status" value="1"/>
</dbReference>
<dbReference type="FunFam" id="2.40.30.10:FF:000007">
    <property type="entry name" value="Translation initiation factor IF-2"/>
    <property type="match status" value="1"/>
</dbReference>
<dbReference type="FunFam" id="2.40.30.10:FF:000008">
    <property type="entry name" value="Translation initiation factor IF-2"/>
    <property type="match status" value="1"/>
</dbReference>
<dbReference type="FunFam" id="3.40.50.10050:FF:000001">
    <property type="entry name" value="Translation initiation factor IF-2"/>
    <property type="match status" value="1"/>
</dbReference>
<dbReference type="FunFam" id="3.40.50.300:FF:000019">
    <property type="entry name" value="Translation initiation factor IF-2"/>
    <property type="match status" value="1"/>
</dbReference>
<dbReference type="Gene3D" id="1.10.10.2480">
    <property type="match status" value="1"/>
</dbReference>
<dbReference type="Gene3D" id="3.40.50.300">
    <property type="entry name" value="P-loop containing nucleotide triphosphate hydrolases"/>
    <property type="match status" value="1"/>
</dbReference>
<dbReference type="Gene3D" id="2.40.30.10">
    <property type="entry name" value="Translation factors"/>
    <property type="match status" value="2"/>
</dbReference>
<dbReference type="Gene3D" id="3.40.50.10050">
    <property type="entry name" value="Translation initiation factor IF- 2, domain 3"/>
    <property type="match status" value="1"/>
</dbReference>
<dbReference type="HAMAP" id="MF_00100_B">
    <property type="entry name" value="IF_2_B"/>
    <property type="match status" value="1"/>
</dbReference>
<dbReference type="InterPro" id="IPR053905">
    <property type="entry name" value="EF-G-like_DII"/>
</dbReference>
<dbReference type="InterPro" id="IPR044145">
    <property type="entry name" value="IF2_II"/>
</dbReference>
<dbReference type="InterPro" id="IPR006847">
    <property type="entry name" value="IF2_N"/>
</dbReference>
<dbReference type="InterPro" id="IPR027417">
    <property type="entry name" value="P-loop_NTPase"/>
</dbReference>
<dbReference type="InterPro" id="IPR005225">
    <property type="entry name" value="Small_GTP-bd"/>
</dbReference>
<dbReference type="InterPro" id="IPR000795">
    <property type="entry name" value="T_Tr_GTP-bd_dom"/>
</dbReference>
<dbReference type="InterPro" id="IPR000178">
    <property type="entry name" value="TF_IF2_bacterial-like"/>
</dbReference>
<dbReference type="InterPro" id="IPR015760">
    <property type="entry name" value="TIF_IF2"/>
</dbReference>
<dbReference type="InterPro" id="IPR023115">
    <property type="entry name" value="TIF_IF2_dom3"/>
</dbReference>
<dbReference type="InterPro" id="IPR036925">
    <property type="entry name" value="TIF_IF2_dom3_sf"/>
</dbReference>
<dbReference type="InterPro" id="IPR009000">
    <property type="entry name" value="Transl_B-barrel_sf"/>
</dbReference>
<dbReference type="NCBIfam" id="TIGR00487">
    <property type="entry name" value="IF-2"/>
    <property type="match status" value="1"/>
</dbReference>
<dbReference type="NCBIfam" id="TIGR00231">
    <property type="entry name" value="small_GTP"/>
    <property type="match status" value="1"/>
</dbReference>
<dbReference type="PANTHER" id="PTHR43381:SF5">
    <property type="entry name" value="TR-TYPE G DOMAIN-CONTAINING PROTEIN"/>
    <property type="match status" value="1"/>
</dbReference>
<dbReference type="PANTHER" id="PTHR43381">
    <property type="entry name" value="TRANSLATION INITIATION FACTOR IF-2-RELATED"/>
    <property type="match status" value="1"/>
</dbReference>
<dbReference type="Pfam" id="PF22042">
    <property type="entry name" value="EF-G_D2"/>
    <property type="match status" value="1"/>
</dbReference>
<dbReference type="Pfam" id="PF00009">
    <property type="entry name" value="GTP_EFTU"/>
    <property type="match status" value="1"/>
</dbReference>
<dbReference type="Pfam" id="PF11987">
    <property type="entry name" value="IF-2"/>
    <property type="match status" value="1"/>
</dbReference>
<dbReference type="Pfam" id="PF04760">
    <property type="entry name" value="IF2_N"/>
    <property type="match status" value="2"/>
</dbReference>
<dbReference type="SUPFAM" id="SSF52156">
    <property type="entry name" value="Initiation factor IF2/eIF5b, domain 3"/>
    <property type="match status" value="1"/>
</dbReference>
<dbReference type="SUPFAM" id="SSF52540">
    <property type="entry name" value="P-loop containing nucleoside triphosphate hydrolases"/>
    <property type="match status" value="1"/>
</dbReference>
<dbReference type="SUPFAM" id="SSF50447">
    <property type="entry name" value="Translation proteins"/>
    <property type="match status" value="2"/>
</dbReference>
<dbReference type="PROSITE" id="PS51722">
    <property type="entry name" value="G_TR_2"/>
    <property type="match status" value="1"/>
</dbReference>
<dbReference type="PROSITE" id="PS01176">
    <property type="entry name" value="IF2"/>
    <property type="match status" value="1"/>
</dbReference>
<comment type="function">
    <text evidence="2">One of the essential components for the initiation of protein synthesis. Protects formylmethionyl-tRNA from spontaneous hydrolysis and promotes its binding to the 30S ribosomal subunits. Also involved in the hydrolysis of GTP during the formation of the 70S ribosomal complex.</text>
</comment>
<comment type="subcellular location">
    <subcellularLocation>
        <location evidence="2">Cytoplasm</location>
    </subcellularLocation>
</comment>
<comment type="similarity">
    <text evidence="2">Belongs to the TRAFAC class translation factor GTPase superfamily. Classic translation factor GTPase family. IF-2 subfamily.</text>
</comment>
<protein>
    <recommendedName>
        <fullName evidence="2">Translation initiation factor IF-2</fullName>
    </recommendedName>
</protein>